<sequence length="448" mass="51486">MMLYISAKKAQVAFILYIVLVLRIISGNNDFCKPSSLNSEISGFIGYKCNFSNEGVHNLKPDMRERRSIFCTIHSYFIYDKIRLIIPKKSSSPEFKILPEKCFQKVYTDYENRVETDISELGLIEYEIEENDTNPNYNERTITISPFSPKDIEFFCFCDNTEKVISSIEGRSAMVHVRVLKYPHNILFTNLTNDLFTYLPKTYNESNFVSNVLEVELNDGELFVLACELINKKCFQEGKEKALYKSNKIIYHKNLTIFKAPFYVTSKDVNTECTCKFKNNNYKIVLKPKYEKKVIHGCNFSSNVSSKHTFTDSLDISLVDDSAHISCNVHLSEPKYNHLVGLNCPGDIIPDCFFQVYQPESEELEPSNIVYLDSQINIGDIEYYEDAEGDDKIKLFGIVGSIPKTTSFTCICKKDKKSAYMTVTIDSAYYGFLAKTFIFLIVAILLYI</sequence>
<keyword id="KW-0002">3D-structure</keyword>
<keyword id="KW-1003">Cell membrane</keyword>
<keyword id="KW-1015">Disulfide bond</keyword>
<keyword id="KW-0325">Glycoprotein</keyword>
<keyword id="KW-0336">GPI-anchor</keyword>
<keyword id="KW-0449">Lipoprotein</keyword>
<keyword id="KW-0461">Malaria</keyword>
<keyword id="KW-0472">Membrane</keyword>
<keyword id="KW-1185">Reference proteome</keyword>
<keyword id="KW-0677">Repeat</keyword>
<keyword id="KW-0732">Signal</keyword>
<feature type="signal peptide" evidence="2">
    <location>
        <begin position="1"/>
        <end position="27"/>
    </location>
</feature>
<feature type="chain" id="PRO_0000423560" description="Gametocyte surface protein P45/48">
    <location>
        <begin position="28"/>
        <end position="426"/>
    </location>
</feature>
<feature type="propeptide" id="PRO_0000423561" description="Removed in mature form" evidence="2">
    <location>
        <begin position="427"/>
        <end position="448"/>
    </location>
</feature>
<feature type="domain" description="6-Cys 1" evidence="3">
    <location>
        <begin position="45"/>
        <end position="182"/>
    </location>
</feature>
<feature type="domain" description="6-Cys 2" evidence="3">
    <location>
        <begin position="294"/>
        <end position="426"/>
    </location>
</feature>
<feature type="lipid moiety-binding region" description="GPI-anchor amidated aspartate" evidence="2">
    <location>
        <position position="426"/>
    </location>
</feature>
<feature type="glycosylation site" description="N-linked (GlcNAc...) asparagine" evidence="2">
    <location>
        <position position="50"/>
    </location>
</feature>
<feature type="glycosylation site" description="N-linked (GlcNAc...) asparagine" evidence="2">
    <location>
        <position position="131"/>
    </location>
</feature>
<feature type="glycosylation site" description="N-linked (GlcNAc...) asparagine" evidence="2">
    <location>
        <position position="190"/>
    </location>
</feature>
<feature type="glycosylation site" description="N-linked (GlcNAc...) asparagine" evidence="2">
    <location>
        <position position="204"/>
    </location>
</feature>
<feature type="glycosylation site" description="N-linked (GlcNAc...) asparagine" evidence="2">
    <location>
        <position position="254"/>
    </location>
</feature>
<feature type="glycosylation site" description="N-linked (GlcNAc...) asparagine" evidence="2">
    <location>
        <position position="299"/>
    </location>
</feature>
<feature type="glycosylation site" description="N-linked (GlcNAc...) asparagine" evidence="6">
    <location>
        <position position="303"/>
    </location>
</feature>
<feature type="disulfide bond" evidence="3">
    <location>
        <begin position="49"/>
        <end position="71"/>
    </location>
</feature>
<feature type="disulfide bond" evidence="3">
    <location>
        <begin position="102"/>
        <end position="156"/>
    </location>
</feature>
<feature type="disulfide bond" evidence="5 6 10 11 12">
    <location>
        <begin position="298"/>
        <end position="327"/>
    </location>
</feature>
<feature type="disulfide bond" evidence="5 6 10 11 12">
    <location>
        <begin position="344"/>
        <end position="412"/>
    </location>
</feature>
<feature type="disulfide bond" evidence="5 6 10 11 12">
    <location>
        <begin position="352"/>
        <end position="410"/>
    </location>
</feature>
<feature type="strand" evidence="15">
    <location>
        <begin position="78"/>
        <end position="81"/>
    </location>
</feature>
<feature type="strand" evidence="15">
    <location>
        <begin position="186"/>
        <end position="190"/>
    </location>
</feature>
<feature type="strand" evidence="15">
    <location>
        <begin position="212"/>
        <end position="217"/>
    </location>
</feature>
<feature type="strand" evidence="15">
    <location>
        <begin position="222"/>
        <end position="226"/>
    </location>
</feature>
<feature type="strand" evidence="15">
    <location>
        <begin position="235"/>
        <end position="237"/>
    </location>
</feature>
<feature type="strand" evidence="15">
    <location>
        <begin position="239"/>
        <end position="241"/>
    </location>
</feature>
<feature type="strand" evidence="15">
    <location>
        <begin position="247"/>
        <end position="250"/>
    </location>
</feature>
<feature type="strand" evidence="15">
    <location>
        <begin position="255"/>
        <end position="259"/>
    </location>
</feature>
<feature type="strand" evidence="15">
    <location>
        <begin position="271"/>
        <end position="277"/>
    </location>
</feature>
<feature type="strand" evidence="15">
    <location>
        <begin position="280"/>
        <end position="288"/>
    </location>
</feature>
<feature type="strand" evidence="16">
    <location>
        <begin position="295"/>
        <end position="299"/>
    </location>
</feature>
<feature type="strand" evidence="14">
    <location>
        <begin position="301"/>
        <end position="303"/>
    </location>
</feature>
<feature type="strand" evidence="13">
    <location>
        <begin position="306"/>
        <end position="308"/>
    </location>
</feature>
<feature type="strand" evidence="16">
    <location>
        <begin position="310"/>
        <end position="313"/>
    </location>
</feature>
<feature type="helix" evidence="16">
    <location>
        <begin position="316"/>
        <end position="318"/>
    </location>
</feature>
<feature type="strand" evidence="16">
    <location>
        <begin position="324"/>
        <end position="331"/>
    </location>
</feature>
<feature type="strand" evidence="16">
    <location>
        <begin position="334"/>
        <end position="351"/>
    </location>
</feature>
<feature type="turn" evidence="16">
    <location>
        <begin position="352"/>
        <end position="354"/>
    </location>
</feature>
<feature type="strand" evidence="16">
    <location>
        <begin position="355"/>
        <end position="357"/>
    </location>
</feature>
<feature type="strand" evidence="16">
    <location>
        <begin position="362"/>
        <end position="364"/>
    </location>
</feature>
<feature type="helix" evidence="14">
    <location>
        <begin position="366"/>
        <end position="368"/>
    </location>
</feature>
<feature type="strand" evidence="16">
    <location>
        <begin position="369"/>
        <end position="371"/>
    </location>
</feature>
<feature type="helix" evidence="16">
    <location>
        <begin position="372"/>
        <end position="376"/>
    </location>
</feature>
<feature type="strand" evidence="16">
    <location>
        <begin position="382"/>
        <end position="388"/>
    </location>
</feature>
<feature type="strand" evidence="16">
    <location>
        <begin position="391"/>
        <end position="400"/>
    </location>
</feature>
<feature type="strand" evidence="16">
    <location>
        <begin position="406"/>
        <end position="414"/>
    </location>
</feature>
<feature type="strand" evidence="16">
    <location>
        <begin position="417"/>
        <end position="425"/>
    </location>
</feature>
<reference key="1">
    <citation type="journal article" date="2002" name="Nature">
        <title>Genome sequence of the human malaria parasite Plasmodium falciparum.</title>
        <authorList>
            <person name="Gardner M.J."/>
            <person name="Hall N."/>
            <person name="Fung E."/>
            <person name="White O."/>
            <person name="Berriman M."/>
            <person name="Hyman R.W."/>
            <person name="Carlton J.M."/>
            <person name="Pain A."/>
            <person name="Nelson K.E."/>
            <person name="Bowman S."/>
            <person name="Paulsen I.T."/>
            <person name="James K.D."/>
            <person name="Eisen J.A."/>
            <person name="Rutherford K.M."/>
            <person name="Salzberg S.L."/>
            <person name="Craig A."/>
            <person name="Kyes S."/>
            <person name="Chan M.-S."/>
            <person name="Nene V."/>
            <person name="Shallom S.J."/>
            <person name="Suh B."/>
            <person name="Peterson J."/>
            <person name="Angiuoli S."/>
            <person name="Pertea M."/>
            <person name="Allen J."/>
            <person name="Selengut J."/>
            <person name="Haft D."/>
            <person name="Mather M.W."/>
            <person name="Vaidya A.B."/>
            <person name="Martin D.M.A."/>
            <person name="Fairlamb A.H."/>
            <person name="Fraunholz M.J."/>
            <person name="Roos D.S."/>
            <person name="Ralph S.A."/>
            <person name="McFadden G.I."/>
            <person name="Cummings L.M."/>
            <person name="Subramanian G.M."/>
            <person name="Mungall C."/>
            <person name="Venter J.C."/>
            <person name="Carucci D.J."/>
            <person name="Hoffman S.L."/>
            <person name="Newbold C."/>
            <person name="Davis R.W."/>
            <person name="Fraser C.M."/>
            <person name="Barrell B.G."/>
        </authorList>
    </citation>
    <scope>NUCLEOTIDE SEQUENCE [LARGE SCALE GENOMIC DNA]</scope>
    <source>
        <strain>3D7</strain>
    </source>
</reference>
<reference key="2">
    <citation type="journal article" date="2002" name="Nature">
        <title>Sequence of Plasmodium falciparum chromosomes 1, 3-9 and 13.</title>
        <authorList>
            <person name="Hall N."/>
            <person name="Pain A."/>
            <person name="Berriman M."/>
            <person name="Churcher C.M."/>
            <person name="Harris B."/>
            <person name="Harris D."/>
            <person name="Mungall K.L."/>
            <person name="Bowman S."/>
            <person name="Atkin R."/>
            <person name="Baker S."/>
            <person name="Barron A."/>
            <person name="Brooks K."/>
            <person name="Buckee C.O."/>
            <person name="Burrows C."/>
            <person name="Cherevach I."/>
            <person name="Chillingworth C."/>
            <person name="Chillingworth T."/>
            <person name="Christodoulou Z."/>
            <person name="Clark L."/>
            <person name="Clark R."/>
            <person name="Corton C."/>
            <person name="Cronin A."/>
            <person name="Davies R.M."/>
            <person name="Davis P."/>
            <person name="Dear P."/>
            <person name="Dearden F."/>
            <person name="Doggett J."/>
            <person name="Feltwell T."/>
            <person name="Goble A."/>
            <person name="Goodhead I."/>
            <person name="Gwilliam R."/>
            <person name="Hamlin N."/>
            <person name="Hance Z."/>
            <person name="Harper D."/>
            <person name="Hauser H."/>
            <person name="Hornsby T."/>
            <person name="Holroyd S."/>
            <person name="Horrocks P."/>
            <person name="Humphray S."/>
            <person name="Jagels K."/>
            <person name="James K.D."/>
            <person name="Johnson D."/>
            <person name="Kerhornou A."/>
            <person name="Knights A."/>
            <person name="Konfortov B."/>
            <person name="Kyes S."/>
            <person name="Larke N."/>
            <person name="Lawson D."/>
            <person name="Lennard N."/>
            <person name="Line A."/>
            <person name="Maddison M."/>
            <person name="Mclean J."/>
            <person name="Mooney P."/>
            <person name="Moule S."/>
            <person name="Murphy L."/>
            <person name="Oliver K."/>
            <person name="Ormond D."/>
            <person name="Price C."/>
            <person name="Quail M.A."/>
            <person name="Rabbinowitsch E."/>
            <person name="Rajandream M.A."/>
            <person name="Rutter S."/>
            <person name="Rutherford K.M."/>
            <person name="Sanders M."/>
            <person name="Simmonds M."/>
            <person name="Seeger K."/>
            <person name="Sharp S."/>
            <person name="Smith R."/>
            <person name="Squares R."/>
            <person name="Squares S."/>
            <person name="Stevens K."/>
            <person name="Taylor K."/>
            <person name="Tivey A."/>
            <person name="Unwin L."/>
            <person name="Whitehead S."/>
            <person name="Woodward J.R."/>
            <person name="Sulston J.E."/>
            <person name="Craig A."/>
            <person name="Newbold C."/>
            <person name="Barrell B.G."/>
        </authorList>
    </citation>
    <scope>NUCLEOTIDE SEQUENCE [LARGE SCALE GENOMIC DNA]</scope>
    <source>
        <strain>3D7</strain>
    </source>
</reference>
<reference key="3">
    <citation type="journal article" date="1992" name="Mol. Biochem. Parasitol.">
        <title>Further characterization of interactions between gamete surface antigens of Plasmodium falciparum.</title>
        <authorList>
            <person name="Kumar N."/>
            <person name="Wizel B."/>
        </authorList>
    </citation>
    <scope>INTERACTION WITH PF230</scope>
</reference>
<reference key="4">
    <citation type="journal article" date="2008" name="Proc. Natl. Acad. Sci. U.S.A.">
        <title>Correctly folded Pfs48/45 protein of Plasmodium falciparum elicits malaria transmission-blocking immunity in mice.</title>
        <authorList>
            <person name="Outchkourov N.S."/>
            <person name="Roeffen W."/>
            <person name="Kaan A."/>
            <person name="Jansen J."/>
            <person name="Luty A."/>
            <person name="Schuiffel D."/>
            <person name="van Gemert G.J."/>
            <person name="van de Vegte-Bolmer M."/>
            <person name="Sauerwein R.W."/>
            <person name="Stunnenberg H.G."/>
        </authorList>
    </citation>
    <scope>PRODUCTION OF RECOMBINANT PROTEIN</scope>
</reference>
<reference key="5">
    <citation type="journal article" date="2009" name="PLoS ONE">
        <title>A potent malaria transmission blocking vaccine based on codon harmonized full length Pfs48/45 expressed in Escherichia coli.</title>
        <authorList>
            <person name="Chowdhury D.R."/>
            <person name="Angov E."/>
            <person name="Kariuki T."/>
            <person name="Kumar N."/>
        </authorList>
    </citation>
    <scope>PRODUCTION OF RECOMBINANT PROTEIN</scope>
</reference>
<reference evidence="12" key="6">
    <citation type="journal article" date="2018" name="Nat. Commun.">
        <title>Structural basis for recognition of the malaria vaccine candidate Pfs48/45 by a transmission blocking antibody.</title>
        <authorList>
            <person name="Lennartz F."/>
            <person name="Brod F."/>
            <person name="Dabbs R."/>
            <person name="Miura K."/>
            <person name="Mekhaiel D."/>
            <person name="Marini A."/>
            <person name="Jore M.M."/>
            <person name="Soegaard M.M."/>
            <person name="Joergensen T."/>
            <person name="de Jongh W.A."/>
            <person name="Sauerwein R.W."/>
            <person name="Long C.A."/>
            <person name="Biswas S."/>
            <person name="Higgins M.K."/>
        </authorList>
    </citation>
    <scope>X-RAY CRYSTALLOGRAPHY (3.23 ANGSTROMS) OF 293-428 IN COMPLEX WITH ANTIBODY</scope>
    <scope>BIOTECHNOLOGY</scope>
    <scope>DISULFIDE BONDS</scope>
</reference>
<reference evidence="10 11" key="7">
    <citation type="journal article" date="2018" name="Nat. Commun.">
        <title>Structural delineation of potent transmission-blocking epitope I on malaria antigen Pfs48/45.</title>
        <authorList>
            <person name="Kundu P."/>
            <person name="Semesi A."/>
            <person name="Jore M.M."/>
            <person name="Morin M.J."/>
            <person name="Price V.L."/>
            <person name="Liang A."/>
            <person name="Li J."/>
            <person name="Miura K."/>
            <person name="Sauerwein R.W."/>
            <person name="King C.R."/>
            <person name="Julien J.P."/>
        </authorList>
    </citation>
    <scope>X-RAY CRYSTALLOGRAPHY (2.60 ANGSTROMS) OF 291-428 IN COMPLEX WITH ANTIBODY</scope>
    <scope>DISULFIDE BONDS</scope>
    <scope>GLYCOSYLATION AT ASN-303</scope>
</reference>
<evidence type="ECO:0000250" key="1">
    <source>
        <dbReference type="UniProtKB" id="Q4YSU6"/>
    </source>
</evidence>
<evidence type="ECO:0000255" key="2"/>
<evidence type="ECO:0000255" key="3">
    <source>
        <dbReference type="PROSITE-ProRule" id="PRU01038"/>
    </source>
</evidence>
<evidence type="ECO:0000269" key="4">
    <source>
    </source>
</evidence>
<evidence type="ECO:0000269" key="5">
    <source>
    </source>
</evidence>
<evidence type="ECO:0000269" key="6">
    <source>
    </source>
</evidence>
<evidence type="ECO:0000305" key="7">
    <source>
    </source>
</evidence>
<evidence type="ECO:0000305" key="8">
    <source>
    </source>
</evidence>
<evidence type="ECO:0000305" key="9">
    <source>
    </source>
</evidence>
<evidence type="ECO:0007744" key="10">
    <source>
        <dbReference type="PDB" id="6E62"/>
    </source>
</evidence>
<evidence type="ECO:0007744" key="11">
    <source>
        <dbReference type="PDB" id="6E63"/>
    </source>
</evidence>
<evidence type="ECO:0007744" key="12">
    <source>
        <dbReference type="PDB" id="6H5N"/>
    </source>
</evidence>
<evidence type="ECO:0007829" key="13">
    <source>
        <dbReference type="PDB" id="6E62"/>
    </source>
</evidence>
<evidence type="ECO:0007829" key="14">
    <source>
        <dbReference type="PDB" id="7UNB"/>
    </source>
</evidence>
<evidence type="ECO:0007829" key="15">
    <source>
        <dbReference type="PDB" id="7ZWF"/>
    </source>
</evidence>
<evidence type="ECO:0007829" key="16">
    <source>
        <dbReference type="PDB" id="7ZWI"/>
    </source>
</evidence>
<comment type="function">
    <text evidence="1">Gametocyte surface protein required for male fertility.</text>
</comment>
<comment type="subunit">
    <text evidence="4">Heterodimer; heterodimerizes with PF230.</text>
</comment>
<comment type="subcellular location">
    <subcellularLocation>
        <location evidence="1">Cell surface</location>
    </subcellularLocation>
    <subcellularLocation>
        <location evidence="1">Cell membrane</location>
        <topology evidence="1">Lipid-anchor</topology>
        <topology evidence="1">GPI-anchor</topology>
    </subcellularLocation>
    <text evidence="1">Present on the surface of male and female gametocytes.</text>
</comment>
<comment type="biotechnology">
    <text evidence="7 8 9">Promising transmission-blocking vaccine candidate: targeting the protein would prevent transmission of the parasite decreasing the malaria burden. However, efforts to produce full length recombinant protein in a functional conformation is difficult. Different approaches have been tested to produce a recombinant protein with display of its transmission-blocking epitopes.</text>
</comment>
<accession>Q8I6T1</accession>
<accession>A0A5K1K917</accession>
<proteinExistence type="evidence at protein level"/>
<gene>
    <name type="primary">PF45/48</name>
    <name type="synonym">PFS45-48</name>
    <name type="synonym">PFS45/48</name>
    <name type="ORF">PF13_0247</name>
    <name type="ORF">PF3D7_1346700</name>
</gene>
<dbReference type="EMBL" id="AL844509">
    <property type="protein sequence ID" value="VWP77780.1"/>
    <property type="molecule type" value="Genomic_DNA"/>
</dbReference>
<dbReference type="RefSeq" id="XP_001350181.1">
    <property type="nucleotide sequence ID" value="XM_001350145.1"/>
</dbReference>
<dbReference type="PDB" id="6E62">
    <property type="method" value="X-ray"/>
    <property type="resolution" value="2.70 A"/>
    <property type="chains" value="A/P=291-428"/>
</dbReference>
<dbReference type="PDB" id="6E63">
    <property type="method" value="X-ray"/>
    <property type="resolution" value="2.60 A"/>
    <property type="chains" value="A/P=291-428"/>
</dbReference>
<dbReference type="PDB" id="6H5N">
    <property type="method" value="X-ray"/>
    <property type="resolution" value="3.23 A"/>
    <property type="chains" value="A/D=293-428"/>
</dbReference>
<dbReference type="PDB" id="7UNB">
    <property type="method" value="X-ray"/>
    <property type="resolution" value="2.18 A"/>
    <property type="chains" value="R=291-428"/>
</dbReference>
<dbReference type="PDB" id="7UXL">
    <property type="method" value="X-ray"/>
    <property type="resolution" value="2.86 A"/>
    <property type="chains" value="R=291-428"/>
</dbReference>
<dbReference type="PDB" id="7ZWF">
    <property type="method" value="X-ray"/>
    <property type="resolution" value="2.13 A"/>
    <property type="chains" value="A=1-428"/>
</dbReference>
<dbReference type="PDB" id="7ZWI">
    <property type="method" value="X-ray"/>
    <property type="resolution" value="1.90 A"/>
    <property type="chains" value="A/D=1-429"/>
</dbReference>
<dbReference type="PDB" id="7ZWM">
    <property type="method" value="X-ray"/>
    <property type="resolution" value="3.69 A"/>
    <property type="chains" value="A/F=1-428"/>
</dbReference>
<dbReference type="PDB" id="7ZXF">
    <property type="method" value="X-ray"/>
    <property type="resolution" value="3.72 A"/>
    <property type="chains" value="A=1-448"/>
</dbReference>
<dbReference type="PDB" id="7ZXG">
    <property type="method" value="X-ray"/>
    <property type="resolution" value="4.20 A"/>
    <property type="chains" value="A/D=1-428"/>
</dbReference>
<dbReference type="PDB" id="8U1P">
    <property type="method" value="EM"/>
    <property type="resolution" value="3.30 A"/>
    <property type="chains" value="A=28-428"/>
</dbReference>
<dbReference type="PDBsum" id="6E62"/>
<dbReference type="PDBsum" id="6E63"/>
<dbReference type="PDBsum" id="6H5N"/>
<dbReference type="PDBsum" id="7UNB"/>
<dbReference type="PDBsum" id="7UXL"/>
<dbReference type="PDBsum" id="7ZWF"/>
<dbReference type="PDBsum" id="7ZWI"/>
<dbReference type="PDBsum" id="7ZWM"/>
<dbReference type="PDBsum" id="7ZXF"/>
<dbReference type="PDBsum" id="7ZXG"/>
<dbReference type="PDBsum" id="8U1P"/>
<dbReference type="EMDB" id="EMD-41822"/>
<dbReference type="SMR" id="Q8I6T1"/>
<dbReference type="FunCoup" id="Q8I6T1">
    <property type="interactions" value="474"/>
</dbReference>
<dbReference type="STRING" id="36329.Q8I6T1"/>
<dbReference type="GlyCosmos" id="Q8I6T1">
    <property type="glycosylation" value="7 sites, No reported glycans"/>
</dbReference>
<dbReference type="iPTMnet" id="Q8I6T1"/>
<dbReference type="PaxDb" id="5833-PF13_0247"/>
<dbReference type="ABCD" id="Q8I6T1">
    <property type="antibodies" value="2 sequenced antibodies"/>
</dbReference>
<dbReference type="EnsemblProtists" id="CAD52590">
    <property type="protein sequence ID" value="CAD52590"/>
    <property type="gene ID" value="PF3D7_1346700"/>
</dbReference>
<dbReference type="GeneID" id="814212"/>
<dbReference type="KEGG" id="pfa:PF3D7_1346700"/>
<dbReference type="VEuPathDB" id="PlasmoDB:PF3D7_1346700"/>
<dbReference type="HOGENOM" id="CLU_611777_0_0_1"/>
<dbReference type="InParanoid" id="Q8I6T1"/>
<dbReference type="OMA" id="PECFFQV"/>
<dbReference type="OrthoDB" id="390246at2759"/>
<dbReference type="PhylomeDB" id="Q8I6T1"/>
<dbReference type="Proteomes" id="UP000001450">
    <property type="component" value="Chromosome 13"/>
</dbReference>
<dbReference type="GO" id="GO:0009986">
    <property type="term" value="C:cell surface"/>
    <property type="evidence" value="ECO:0007669"/>
    <property type="project" value="UniProtKB-SubCell"/>
</dbReference>
<dbReference type="GO" id="GO:0005886">
    <property type="term" value="C:plasma membrane"/>
    <property type="evidence" value="ECO:0007669"/>
    <property type="project" value="UniProtKB-SubCell"/>
</dbReference>
<dbReference type="GO" id="GO:0098552">
    <property type="term" value="C:side of membrane"/>
    <property type="evidence" value="ECO:0007669"/>
    <property type="project" value="UniProtKB-KW"/>
</dbReference>
<dbReference type="Gene3D" id="2.60.40.2860">
    <property type="match status" value="2"/>
</dbReference>
<dbReference type="InterPro" id="IPR010884">
    <property type="entry name" value="6_CYS_dom"/>
</dbReference>
<dbReference type="InterPro" id="IPR038160">
    <property type="entry name" value="6_CYS_dom_sf"/>
</dbReference>
<dbReference type="Pfam" id="PF07422">
    <property type="entry name" value="s48_45"/>
    <property type="match status" value="2"/>
</dbReference>
<dbReference type="SMART" id="SM00970">
    <property type="entry name" value="s48_45"/>
    <property type="match status" value="2"/>
</dbReference>
<dbReference type="PROSITE" id="PS51701">
    <property type="entry name" value="6_CYS"/>
    <property type="match status" value="2"/>
</dbReference>
<protein>
    <recommendedName>
        <fullName>Gametocyte surface protein P45/48</fullName>
    </recommendedName>
</protein>
<organism>
    <name type="scientific">Plasmodium falciparum (isolate 3D7)</name>
    <dbReference type="NCBI Taxonomy" id="36329"/>
    <lineage>
        <taxon>Eukaryota</taxon>
        <taxon>Sar</taxon>
        <taxon>Alveolata</taxon>
        <taxon>Apicomplexa</taxon>
        <taxon>Aconoidasida</taxon>
        <taxon>Haemosporida</taxon>
        <taxon>Plasmodiidae</taxon>
        <taxon>Plasmodium</taxon>
        <taxon>Plasmodium (Laverania)</taxon>
    </lineage>
</organism>
<name>P4548_PLAF7</name>